<feature type="signal peptide" evidence="1">
    <location>
        <begin position="1"/>
        <end position="20"/>
    </location>
</feature>
<feature type="propeptide" id="PRO_0000033708">
    <location>
        <begin position="21"/>
        <end position="310"/>
    </location>
</feature>
<feature type="chain" id="PRO_0000033709" description="Inhibin beta A chain">
    <location>
        <begin position="311"/>
        <end position="426"/>
    </location>
</feature>
<feature type="region of interest" description="Disordered" evidence="3">
    <location>
        <begin position="259"/>
        <end position="288"/>
    </location>
</feature>
<feature type="compositionally biased region" description="Basic and acidic residues" evidence="3">
    <location>
        <begin position="263"/>
        <end position="274"/>
    </location>
</feature>
<feature type="glycosylation site" description="N-linked (GlcNAc...) asparagine" evidence="2">
    <location>
        <position position="165"/>
    </location>
</feature>
<feature type="disulfide bond" evidence="10">
    <location>
        <begin position="314"/>
        <end position="322"/>
    </location>
</feature>
<feature type="disulfide bond" evidence="10">
    <location>
        <begin position="321"/>
        <end position="391"/>
    </location>
</feature>
<feature type="disulfide bond" evidence="10">
    <location>
        <begin position="350"/>
        <end position="423"/>
    </location>
</feature>
<feature type="disulfide bond" evidence="10">
    <location>
        <begin position="354"/>
        <end position="425"/>
    </location>
</feature>
<feature type="disulfide bond" description="Interchain" evidence="10">
    <location>
        <position position="390"/>
    </location>
</feature>
<feature type="sequence variant" id="VAR_072640" description="Found in a patient with early-onset epithelial ovarian tumor; uncertain significance." evidence="12">
    <original>G</original>
    <variation>E</variation>
    <location>
        <position position="280"/>
    </location>
</feature>
<feature type="sequence variant" id="VAR_052566" description="In dbSNP:rs41294833.">
    <original>Q</original>
    <variation>P</variation>
    <location>
        <position position="299"/>
    </location>
</feature>
<feature type="sequence variant" id="VAR_072641" description="Found in a patient with early-onset epithelial ovarian tumor; uncertain significance; alters the ratio of secreted activins and ihibins; dbSNP:rs1361491625." evidence="12">
    <original>N</original>
    <variation>S</variation>
    <location>
        <position position="386"/>
    </location>
</feature>
<feature type="sequence conflict" description="In Ref. 7; CAA51163." evidence="16" ref="7">
    <original>RMR</original>
    <variation>AC</variation>
    <location>
        <begin position="377"/>
        <end position="379"/>
    </location>
</feature>
<feature type="helix" evidence="20">
    <location>
        <begin position="52"/>
        <end position="65"/>
    </location>
</feature>
<feature type="helix" evidence="20">
    <location>
        <begin position="80"/>
        <end position="89"/>
    </location>
</feature>
<feature type="strand" evidence="20">
    <location>
        <begin position="92"/>
        <end position="95"/>
    </location>
</feature>
<feature type="helix" evidence="20">
    <location>
        <begin position="97"/>
        <end position="99"/>
    </location>
</feature>
<feature type="strand" evidence="20">
    <location>
        <begin position="101"/>
        <end position="103"/>
    </location>
</feature>
<feature type="helix" evidence="20">
    <location>
        <begin position="107"/>
        <end position="118"/>
    </location>
</feature>
<feature type="strand" evidence="20">
    <location>
        <begin position="120"/>
        <end position="126"/>
    </location>
</feature>
<feature type="strand" evidence="20">
    <location>
        <begin position="135"/>
        <end position="139"/>
    </location>
</feature>
<feature type="helix" evidence="20">
    <location>
        <begin position="143"/>
        <end position="146"/>
    </location>
</feature>
<feature type="strand" evidence="20">
    <location>
        <begin position="149"/>
        <end position="160"/>
    </location>
</feature>
<feature type="strand" evidence="20">
    <location>
        <begin position="170"/>
        <end position="180"/>
    </location>
</feature>
<feature type="strand" evidence="20">
    <location>
        <begin position="201"/>
        <end position="212"/>
    </location>
</feature>
<feature type="strand" evidence="20">
    <location>
        <begin position="217"/>
        <end position="222"/>
    </location>
</feature>
<feature type="helix" evidence="20">
    <location>
        <begin position="224"/>
        <end position="232"/>
    </location>
</feature>
<feature type="strand" evidence="20">
    <location>
        <begin position="237"/>
        <end position="243"/>
    </location>
</feature>
<feature type="turn" evidence="20">
    <location>
        <begin position="245"/>
        <end position="251"/>
    </location>
</feature>
<feature type="strand" evidence="20">
    <location>
        <begin position="253"/>
        <end position="255"/>
    </location>
</feature>
<feature type="helix" evidence="20">
    <location>
        <begin position="284"/>
        <end position="289"/>
    </location>
</feature>
<feature type="strand" evidence="20">
    <location>
        <begin position="292"/>
        <end position="298"/>
    </location>
</feature>
<feature type="strand" evidence="20">
    <location>
        <begin position="318"/>
        <end position="320"/>
    </location>
</feature>
<feature type="strand" evidence="17">
    <location>
        <begin position="321"/>
        <end position="324"/>
    </location>
</feature>
<feature type="strand" evidence="17">
    <location>
        <begin position="327"/>
        <end position="329"/>
    </location>
</feature>
<feature type="helix" evidence="17">
    <location>
        <begin position="330"/>
        <end position="333"/>
    </location>
</feature>
<feature type="turn" evidence="17">
    <location>
        <begin position="336"/>
        <end position="338"/>
    </location>
</feature>
<feature type="strand" evidence="17">
    <location>
        <begin position="339"/>
        <end position="341"/>
    </location>
</feature>
<feature type="strand" evidence="17">
    <location>
        <begin position="343"/>
        <end position="346"/>
    </location>
</feature>
<feature type="strand" evidence="17">
    <location>
        <begin position="349"/>
        <end position="352"/>
    </location>
</feature>
<feature type="helix" evidence="18">
    <location>
        <begin position="356"/>
        <end position="358"/>
    </location>
</feature>
<feature type="strand" evidence="21">
    <location>
        <begin position="363"/>
        <end position="365"/>
    </location>
</feature>
<feature type="helix" evidence="17">
    <location>
        <begin position="368"/>
        <end position="375"/>
    </location>
</feature>
<feature type="turn" evidence="19">
    <location>
        <begin position="378"/>
        <end position="380"/>
    </location>
</feature>
<feature type="turn" evidence="18">
    <location>
        <begin position="382"/>
        <end position="386"/>
    </location>
</feature>
<feature type="strand" evidence="17">
    <location>
        <begin position="391"/>
        <end position="404"/>
    </location>
</feature>
<feature type="turn" evidence="18">
    <location>
        <begin position="406"/>
        <end position="408"/>
    </location>
</feature>
<feature type="strand" evidence="17">
    <location>
        <begin position="410"/>
        <end position="425"/>
    </location>
</feature>
<proteinExistence type="evidence at protein level"/>
<protein>
    <recommendedName>
        <fullName>Inhibin beta A chain</fullName>
    </recommendedName>
    <alternativeName>
        <fullName>Activin beta-A chain</fullName>
    </alternativeName>
    <alternativeName>
        <fullName>Erythroid differentiation protein</fullName>
        <shortName>EDF</shortName>
    </alternativeName>
</protein>
<accession>P08476</accession>
<accession>Q14599</accession>
<evidence type="ECO:0000250" key="1"/>
<evidence type="ECO:0000255" key="2"/>
<evidence type="ECO:0000256" key="3">
    <source>
        <dbReference type="SAM" id="MobiDB-lite"/>
    </source>
</evidence>
<evidence type="ECO:0000269" key="4">
    <source>
    </source>
</evidence>
<evidence type="ECO:0000269" key="5">
    <source>
    </source>
</evidence>
<evidence type="ECO:0000269" key="6">
    <source>
    </source>
</evidence>
<evidence type="ECO:0000269" key="7">
    <source>
    </source>
</evidence>
<evidence type="ECO:0000269" key="8">
    <source>
    </source>
</evidence>
<evidence type="ECO:0000269" key="9">
    <source>
    </source>
</evidence>
<evidence type="ECO:0000269" key="10">
    <source>
    </source>
</evidence>
<evidence type="ECO:0000269" key="11">
    <source>
    </source>
</evidence>
<evidence type="ECO:0000269" key="12">
    <source>
    </source>
</evidence>
<evidence type="ECO:0000269" key="13">
    <source>
    </source>
</evidence>
<evidence type="ECO:0000269" key="14">
    <source>
    </source>
</evidence>
<evidence type="ECO:0000269" key="15">
    <source>
    </source>
</evidence>
<evidence type="ECO:0000305" key="16"/>
<evidence type="ECO:0007829" key="17">
    <source>
        <dbReference type="PDB" id="2ARP"/>
    </source>
</evidence>
<evidence type="ECO:0007829" key="18">
    <source>
        <dbReference type="PDB" id="2ARV"/>
    </source>
</evidence>
<evidence type="ECO:0007829" key="19">
    <source>
        <dbReference type="PDB" id="2B0U"/>
    </source>
</evidence>
<evidence type="ECO:0007829" key="20">
    <source>
        <dbReference type="PDB" id="5HLY"/>
    </source>
</evidence>
<evidence type="ECO:0007829" key="21">
    <source>
        <dbReference type="PDB" id="7U5P"/>
    </source>
</evidence>
<dbReference type="EMBL" id="M13436">
    <property type="protein sequence ID" value="AAA59168.1"/>
    <property type="molecule type" value="mRNA"/>
</dbReference>
<dbReference type="EMBL" id="X04447">
    <property type="protein sequence ID" value="CAA28041.1"/>
    <property type="molecule type" value="Genomic_DNA"/>
</dbReference>
<dbReference type="EMBL" id="X57578">
    <property type="protein sequence ID" value="CAA40805.1"/>
    <property type="molecule type" value="Genomic_DNA"/>
</dbReference>
<dbReference type="EMBL" id="X57579">
    <property type="protein sequence ID" value="CAA40805.1"/>
    <property type="status" value="JOINED"/>
    <property type="molecule type" value="Genomic_DNA"/>
</dbReference>
<dbReference type="EMBL" id="X57579">
    <property type="protein sequence ID" value="CAA40806.1"/>
    <property type="molecule type" value="Genomic_DNA"/>
</dbReference>
<dbReference type="EMBL" id="AC005027">
    <property type="protein sequence ID" value="AAQ96861.1"/>
    <property type="molecule type" value="Genomic_DNA"/>
</dbReference>
<dbReference type="EMBL" id="BC007858">
    <property type="protein sequence ID" value="AAH07858.1"/>
    <property type="molecule type" value="mRNA"/>
</dbReference>
<dbReference type="EMBL" id="J03634">
    <property type="protein sequence ID" value="AAA35787.1"/>
    <property type="molecule type" value="mRNA"/>
</dbReference>
<dbReference type="EMBL" id="X72498">
    <property type="protein sequence ID" value="CAA51163.1"/>
    <property type="molecule type" value="mRNA"/>
</dbReference>
<dbReference type="CCDS" id="CCDS5464.1"/>
<dbReference type="PIR" id="S30488">
    <property type="entry name" value="B24248"/>
</dbReference>
<dbReference type="RefSeq" id="NP_002183.1">
    <property type="nucleotide sequence ID" value="NM_002192.4"/>
</dbReference>
<dbReference type="RefSeq" id="XP_016867663.2">
    <property type="nucleotide sequence ID" value="XM_017012174.2"/>
</dbReference>
<dbReference type="RefSeq" id="XP_016867665.1">
    <property type="nucleotide sequence ID" value="XM_017012176.1"/>
</dbReference>
<dbReference type="RefSeq" id="XP_047276291.1">
    <property type="nucleotide sequence ID" value="XM_047420335.1"/>
</dbReference>
<dbReference type="PDB" id="1NYS">
    <property type="method" value="X-ray"/>
    <property type="resolution" value="3.05 A"/>
    <property type="chains" value="B/D=311-426"/>
</dbReference>
<dbReference type="PDB" id="1NYU">
    <property type="method" value="X-ray"/>
    <property type="resolution" value="3.10 A"/>
    <property type="chains" value="B/D=311-426"/>
</dbReference>
<dbReference type="PDB" id="1S4Y">
    <property type="method" value="X-ray"/>
    <property type="resolution" value="2.30 A"/>
    <property type="chains" value="B/D=311-426"/>
</dbReference>
<dbReference type="PDB" id="2ARP">
    <property type="method" value="X-ray"/>
    <property type="resolution" value="2.00 A"/>
    <property type="chains" value="A=311-426"/>
</dbReference>
<dbReference type="PDB" id="2ARV">
    <property type="method" value="X-ray"/>
    <property type="resolution" value="2.00 A"/>
    <property type="chains" value="A/B=311-426"/>
</dbReference>
<dbReference type="PDB" id="2B0U">
    <property type="method" value="X-ray"/>
    <property type="resolution" value="2.80 A"/>
    <property type="chains" value="A/B=311-426"/>
</dbReference>
<dbReference type="PDB" id="2P6A">
    <property type="method" value="X-ray"/>
    <property type="resolution" value="3.40 A"/>
    <property type="chains" value="A/B=311-426"/>
</dbReference>
<dbReference type="PDB" id="3B4V">
    <property type="method" value="X-ray"/>
    <property type="resolution" value="2.48 A"/>
    <property type="chains" value="A/B/E/F=311-426"/>
</dbReference>
<dbReference type="PDB" id="4MID">
    <property type="method" value="X-ray"/>
    <property type="resolution" value="2.14 A"/>
    <property type="chains" value="A=334-426"/>
</dbReference>
<dbReference type="PDB" id="5HLY">
    <property type="method" value="X-ray"/>
    <property type="resolution" value="2.30 A"/>
    <property type="chains" value="A=30-426"/>
</dbReference>
<dbReference type="PDB" id="5HLZ">
    <property type="method" value="X-ray"/>
    <property type="resolution" value="2.85 A"/>
    <property type="chains" value="A/C/E/G=30-305, B/D/F/H=311-426"/>
</dbReference>
<dbReference type="PDB" id="6Y6N">
    <property type="method" value="X-ray"/>
    <property type="resolution" value="2.03 A"/>
    <property type="chains" value="A/B=311-426"/>
</dbReference>
<dbReference type="PDB" id="6Y6O">
    <property type="method" value="X-ray"/>
    <property type="resolution" value="2.04 A"/>
    <property type="chains" value="A/B=311-426"/>
</dbReference>
<dbReference type="PDB" id="7OLY">
    <property type="method" value="X-ray"/>
    <property type="resolution" value="3.27 A"/>
    <property type="chains" value="A=311-426"/>
</dbReference>
<dbReference type="PDB" id="7U5P">
    <property type="method" value="X-ray"/>
    <property type="resolution" value="3.14 A"/>
    <property type="chains" value="B/D/F/H=311-426"/>
</dbReference>
<dbReference type="PDB" id="9I5W">
    <property type="method" value="X-ray"/>
    <property type="resolution" value="1.77 A"/>
    <property type="chains" value="A/B=311-426"/>
</dbReference>
<dbReference type="PDBsum" id="1NYS"/>
<dbReference type="PDBsum" id="1NYU"/>
<dbReference type="PDBsum" id="1S4Y"/>
<dbReference type="PDBsum" id="2ARP"/>
<dbReference type="PDBsum" id="2ARV"/>
<dbReference type="PDBsum" id="2B0U"/>
<dbReference type="PDBsum" id="2P6A"/>
<dbReference type="PDBsum" id="3B4V"/>
<dbReference type="PDBsum" id="4MID"/>
<dbReference type="PDBsum" id="5HLY"/>
<dbReference type="PDBsum" id="5HLZ"/>
<dbReference type="PDBsum" id="6Y6N"/>
<dbReference type="PDBsum" id="6Y6O"/>
<dbReference type="PDBsum" id="7OLY"/>
<dbReference type="PDBsum" id="7U5P"/>
<dbReference type="PDBsum" id="9I5W"/>
<dbReference type="SMR" id="P08476"/>
<dbReference type="BioGRID" id="109836">
    <property type="interactions" value="20"/>
</dbReference>
<dbReference type="CORUM" id="P08476"/>
<dbReference type="DIP" id="DIP-5824N"/>
<dbReference type="FunCoup" id="P08476">
    <property type="interactions" value="452"/>
</dbReference>
<dbReference type="IntAct" id="P08476">
    <property type="interactions" value="3"/>
</dbReference>
<dbReference type="MINT" id="P08476"/>
<dbReference type="STRING" id="9606.ENSP00000242208"/>
<dbReference type="ChEMBL" id="CHEMBL3588735"/>
<dbReference type="DrugBank" id="DB16379">
    <property type="generic name" value="Garetosmab"/>
</dbReference>
<dbReference type="GlyCosmos" id="P08476">
    <property type="glycosylation" value="3 sites, 3 glycans"/>
</dbReference>
<dbReference type="GlyGen" id="P08476">
    <property type="glycosylation" value="6 sites, 4 O-linked glycans (4 sites)"/>
</dbReference>
<dbReference type="iPTMnet" id="P08476"/>
<dbReference type="PhosphoSitePlus" id="P08476"/>
<dbReference type="BioMuta" id="INHBA"/>
<dbReference type="DMDM" id="124279"/>
<dbReference type="MassIVE" id="P08476"/>
<dbReference type="PaxDb" id="9606-ENSP00000242208"/>
<dbReference type="PeptideAtlas" id="P08476"/>
<dbReference type="ProteomicsDB" id="52111"/>
<dbReference type="ABCD" id="P08476">
    <property type="antibodies" value="22 sequenced antibodies"/>
</dbReference>
<dbReference type="Antibodypedia" id="13122">
    <property type="antibodies" value="566 antibodies from 36 providers"/>
</dbReference>
<dbReference type="DNASU" id="3624"/>
<dbReference type="Ensembl" id="ENST00000242208.5">
    <property type="protein sequence ID" value="ENSP00000242208.4"/>
    <property type="gene ID" value="ENSG00000122641.11"/>
</dbReference>
<dbReference type="Ensembl" id="ENST00000442711.1">
    <property type="protein sequence ID" value="ENSP00000397197.1"/>
    <property type="gene ID" value="ENSG00000122641.11"/>
</dbReference>
<dbReference type="Ensembl" id="ENST00000638023.1">
    <property type="protein sequence ID" value="ENSP00000490646.1"/>
    <property type="gene ID" value="ENSG00000122641.11"/>
</dbReference>
<dbReference type="GeneID" id="3624"/>
<dbReference type="KEGG" id="hsa:3624"/>
<dbReference type="MANE-Select" id="ENST00000242208.5">
    <property type="protein sequence ID" value="ENSP00000242208.4"/>
    <property type="RefSeq nucleotide sequence ID" value="NM_002192.4"/>
    <property type="RefSeq protein sequence ID" value="NP_002183.1"/>
</dbReference>
<dbReference type="UCSC" id="uc003thq.4">
    <property type="organism name" value="human"/>
</dbReference>
<dbReference type="AGR" id="HGNC:6066"/>
<dbReference type="CTD" id="3624"/>
<dbReference type="DisGeNET" id="3624"/>
<dbReference type="GeneCards" id="INHBA"/>
<dbReference type="HGNC" id="HGNC:6066">
    <property type="gene designation" value="INHBA"/>
</dbReference>
<dbReference type="HPA" id="ENSG00000122641">
    <property type="expression patterns" value="Tissue enhanced (gallbladder)"/>
</dbReference>
<dbReference type="MalaCards" id="INHBA"/>
<dbReference type="MIM" id="147290">
    <property type="type" value="gene"/>
</dbReference>
<dbReference type="neXtProt" id="NX_P08476"/>
<dbReference type="OpenTargets" id="ENSG00000122641"/>
<dbReference type="Orphanet" id="213504">
    <property type="disease" value="Adenocarcinoma of ovary"/>
</dbReference>
<dbReference type="PharmGKB" id="PA29877"/>
<dbReference type="VEuPathDB" id="HostDB:ENSG00000122641"/>
<dbReference type="eggNOG" id="KOG3900">
    <property type="taxonomic scope" value="Eukaryota"/>
</dbReference>
<dbReference type="GeneTree" id="ENSGT00940000157116"/>
<dbReference type="HOGENOM" id="CLU_020515_5_1_1"/>
<dbReference type="InParanoid" id="P08476"/>
<dbReference type="OMA" id="HACCKRQ"/>
<dbReference type="OrthoDB" id="6516235at2759"/>
<dbReference type="PAN-GO" id="P08476">
    <property type="GO annotations" value="4 GO annotations based on evolutionary models"/>
</dbReference>
<dbReference type="PhylomeDB" id="P08476"/>
<dbReference type="TreeFam" id="TF351791"/>
<dbReference type="PathwayCommons" id="P08476"/>
<dbReference type="Reactome" id="R-HSA-1502540">
    <property type="pathway name" value="Signaling by Activin"/>
</dbReference>
<dbReference type="Reactome" id="R-HSA-201451">
    <property type="pathway name" value="Signaling by BMP"/>
</dbReference>
<dbReference type="Reactome" id="R-HSA-209822">
    <property type="pathway name" value="Glycoprotein hormones"/>
</dbReference>
<dbReference type="Reactome" id="R-HSA-2473224">
    <property type="pathway name" value="Antagonism of Activin by Follistatin"/>
</dbReference>
<dbReference type="Reactome" id="R-HSA-9839406">
    <property type="pathway name" value="TGFBR3 regulates activin signaling"/>
</dbReference>
<dbReference type="SignaLink" id="P08476"/>
<dbReference type="SIGNOR" id="P08476"/>
<dbReference type="BioGRID-ORCS" id="3624">
    <property type="hits" value="13 hits in 1160 CRISPR screens"/>
</dbReference>
<dbReference type="ChiTaRS" id="INHBA">
    <property type="organism name" value="human"/>
</dbReference>
<dbReference type="EvolutionaryTrace" id="P08476"/>
<dbReference type="GenomeRNAi" id="3624"/>
<dbReference type="Pharos" id="P08476">
    <property type="development level" value="Tbio"/>
</dbReference>
<dbReference type="PRO" id="PR:P08476"/>
<dbReference type="Proteomes" id="UP000005640">
    <property type="component" value="Chromosome 7"/>
</dbReference>
<dbReference type="RNAct" id="P08476">
    <property type="molecule type" value="protein"/>
</dbReference>
<dbReference type="Bgee" id="ENSG00000122641">
    <property type="expression patterns" value="Expressed in cartilage tissue and 166 other cell types or tissues"/>
</dbReference>
<dbReference type="ExpressionAtlas" id="P08476">
    <property type="expression patterns" value="baseline and differential"/>
</dbReference>
<dbReference type="GO" id="GO:0043509">
    <property type="term" value="C:activin A complex"/>
    <property type="evidence" value="ECO:0000314"/>
    <property type="project" value="HGNC-UCL"/>
</dbReference>
<dbReference type="GO" id="GO:0150005">
    <property type="term" value="C:enzyme activator complex"/>
    <property type="evidence" value="ECO:0000314"/>
    <property type="project" value="UniProt"/>
</dbReference>
<dbReference type="GO" id="GO:0005576">
    <property type="term" value="C:extracellular region"/>
    <property type="evidence" value="ECO:0000314"/>
    <property type="project" value="UniProtKB"/>
</dbReference>
<dbReference type="GO" id="GO:0005615">
    <property type="term" value="C:extracellular space"/>
    <property type="evidence" value="ECO:0000318"/>
    <property type="project" value="GO_Central"/>
</dbReference>
<dbReference type="GO" id="GO:0043512">
    <property type="term" value="C:inhibin A complex"/>
    <property type="evidence" value="ECO:0000314"/>
    <property type="project" value="HGNC-UCL"/>
</dbReference>
<dbReference type="GO" id="GO:0048471">
    <property type="term" value="C:perinuclear region of cytoplasm"/>
    <property type="evidence" value="ECO:0007669"/>
    <property type="project" value="Ensembl"/>
</dbReference>
<dbReference type="GO" id="GO:0005125">
    <property type="term" value="F:cytokine activity"/>
    <property type="evidence" value="ECO:0000314"/>
    <property type="project" value="HGNC-UCL"/>
</dbReference>
<dbReference type="GO" id="GO:0008083">
    <property type="term" value="F:growth factor activity"/>
    <property type="evidence" value="ECO:0000304"/>
    <property type="project" value="UniProtKB"/>
</dbReference>
<dbReference type="GO" id="GO:0005179">
    <property type="term" value="F:hormone activity"/>
    <property type="evidence" value="ECO:0000304"/>
    <property type="project" value="UniProtKB"/>
</dbReference>
<dbReference type="GO" id="GO:0042802">
    <property type="term" value="F:identical protein binding"/>
    <property type="evidence" value="ECO:0000353"/>
    <property type="project" value="UniProtKB"/>
</dbReference>
<dbReference type="GO" id="GO:0017046">
    <property type="term" value="F:peptide hormone binding"/>
    <property type="evidence" value="ECO:0000353"/>
    <property type="project" value="UniProtKB"/>
</dbReference>
<dbReference type="GO" id="GO:0044877">
    <property type="term" value="F:protein-containing complex binding"/>
    <property type="evidence" value="ECO:0007669"/>
    <property type="project" value="Ensembl"/>
</dbReference>
<dbReference type="GO" id="GO:0070699">
    <property type="term" value="F:type II activin receptor binding"/>
    <property type="evidence" value="ECO:0000353"/>
    <property type="project" value="BHF-UCL"/>
</dbReference>
<dbReference type="GO" id="GO:0032924">
    <property type="term" value="P:activin receptor signaling pathway"/>
    <property type="evidence" value="ECO:0000314"/>
    <property type="project" value="BHF-UCL"/>
</dbReference>
<dbReference type="GO" id="GO:0008209">
    <property type="term" value="P:androgen metabolic process"/>
    <property type="evidence" value="ECO:0007669"/>
    <property type="project" value="Ensembl"/>
</dbReference>
<dbReference type="GO" id="GO:1903449">
    <property type="term" value="P:androst-4-ene-3,17-dione biosynthetic process"/>
    <property type="evidence" value="ECO:0007669"/>
    <property type="project" value="Ensembl"/>
</dbReference>
<dbReference type="GO" id="GO:0006914">
    <property type="term" value="P:autophagy"/>
    <property type="evidence" value="ECO:0007669"/>
    <property type="project" value="Ensembl"/>
</dbReference>
<dbReference type="GO" id="GO:0060936">
    <property type="term" value="P:cardiac fibroblast cell development"/>
    <property type="evidence" value="ECO:0007669"/>
    <property type="project" value="Ensembl"/>
</dbReference>
<dbReference type="GO" id="GO:0030154">
    <property type="term" value="P:cell differentiation"/>
    <property type="evidence" value="ECO:0000304"/>
    <property type="project" value="UniProtKB"/>
</dbReference>
<dbReference type="GO" id="GO:0007166">
    <property type="term" value="P:cell surface receptor signaling pathway"/>
    <property type="evidence" value="ECO:0000304"/>
    <property type="project" value="UniProtKB"/>
</dbReference>
<dbReference type="GO" id="GO:0007267">
    <property type="term" value="P:cell-cell signaling"/>
    <property type="evidence" value="ECO:0000304"/>
    <property type="project" value="UniProtKB"/>
</dbReference>
<dbReference type="GO" id="GO:1904385">
    <property type="term" value="P:cellular response to angiotensin"/>
    <property type="evidence" value="ECO:0007669"/>
    <property type="project" value="Ensembl"/>
</dbReference>
<dbReference type="GO" id="GO:0071397">
    <property type="term" value="P:cellular response to cholesterol"/>
    <property type="evidence" value="ECO:0007669"/>
    <property type="project" value="Ensembl"/>
</dbReference>
<dbReference type="GO" id="GO:0071372">
    <property type="term" value="P:cellular response to follicle-stimulating hormone stimulus"/>
    <property type="evidence" value="ECO:0007669"/>
    <property type="project" value="Ensembl"/>
</dbReference>
<dbReference type="GO" id="GO:0071456">
    <property type="term" value="P:cellular response to hypoxia"/>
    <property type="evidence" value="ECO:0007669"/>
    <property type="project" value="Ensembl"/>
</dbReference>
<dbReference type="GO" id="GO:0090650">
    <property type="term" value="P:cellular response to oxygen-glucose deprivation"/>
    <property type="evidence" value="ECO:0007669"/>
    <property type="project" value="Ensembl"/>
</dbReference>
<dbReference type="GO" id="GO:0019221">
    <property type="term" value="P:cytokine-mediated signaling pathway"/>
    <property type="evidence" value="ECO:0007669"/>
    <property type="project" value="Ensembl"/>
</dbReference>
<dbReference type="GO" id="GO:0006952">
    <property type="term" value="P:defense response"/>
    <property type="evidence" value="ECO:0000304"/>
    <property type="project" value="UniProtKB"/>
</dbReference>
<dbReference type="GO" id="GO:0035987">
    <property type="term" value="P:endodermal cell differentiation"/>
    <property type="evidence" value="ECO:0000314"/>
    <property type="project" value="BHF-UCL"/>
</dbReference>
<dbReference type="GO" id="GO:0030218">
    <property type="term" value="P:erythrocyte differentiation"/>
    <property type="evidence" value="ECO:0000303"/>
    <property type="project" value="UniProtKB"/>
</dbReference>
<dbReference type="GO" id="GO:0097191">
    <property type="term" value="P:extrinsic apoptotic signaling pathway"/>
    <property type="evidence" value="ECO:0000314"/>
    <property type="project" value="BHF-UCL"/>
</dbReference>
<dbReference type="GO" id="GO:0061029">
    <property type="term" value="P:eyelid development in camera-type eye"/>
    <property type="evidence" value="ECO:0000250"/>
    <property type="project" value="UniProtKB"/>
</dbReference>
<dbReference type="GO" id="GO:0097154">
    <property type="term" value="P:GABAergic neuron differentiation"/>
    <property type="evidence" value="ECO:0000314"/>
    <property type="project" value="ParkinsonsUK-UCL"/>
</dbReference>
<dbReference type="GO" id="GO:0001942">
    <property type="term" value="P:hair follicle development"/>
    <property type="evidence" value="ECO:0000316"/>
    <property type="project" value="UniProtKB"/>
</dbReference>
<dbReference type="GO" id="GO:0002244">
    <property type="term" value="P:hematopoietic progenitor cell differentiation"/>
    <property type="evidence" value="ECO:0000314"/>
    <property type="project" value="UniProtKB"/>
</dbReference>
<dbReference type="GO" id="GO:0042541">
    <property type="term" value="P:hemoglobin biosynthetic process"/>
    <property type="evidence" value="ECO:0000314"/>
    <property type="project" value="UniProtKB"/>
</dbReference>
<dbReference type="GO" id="GO:0008584">
    <property type="term" value="P:male gonad development"/>
    <property type="evidence" value="ECO:0000316"/>
    <property type="project" value="UniProtKB"/>
</dbReference>
<dbReference type="GO" id="GO:0048333">
    <property type="term" value="P:mesodermal cell differentiation"/>
    <property type="evidence" value="ECO:0007669"/>
    <property type="project" value="Ensembl"/>
</dbReference>
<dbReference type="GO" id="GO:0045578">
    <property type="term" value="P:negative regulation of B cell differentiation"/>
    <property type="evidence" value="ECO:0000304"/>
    <property type="project" value="UniProtKB"/>
</dbReference>
<dbReference type="GO" id="GO:0030308">
    <property type="term" value="P:negative regulation of cell growth"/>
    <property type="evidence" value="ECO:0000314"/>
    <property type="project" value="HGNC-UCL"/>
</dbReference>
<dbReference type="GO" id="GO:0008285">
    <property type="term" value="P:negative regulation of cell population proliferation"/>
    <property type="evidence" value="ECO:0000314"/>
    <property type="project" value="UniProtKB"/>
</dbReference>
<dbReference type="GO" id="GO:0046882">
    <property type="term" value="P:negative regulation of follicle-stimulating hormone secretion"/>
    <property type="evidence" value="ECO:0000303"/>
    <property type="project" value="UniProtKB"/>
</dbReference>
<dbReference type="GO" id="GO:2000134">
    <property type="term" value="P:negative regulation of G1/S transition of mitotic cell cycle"/>
    <property type="evidence" value="ECO:0000314"/>
    <property type="project" value="HGNC-UCL"/>
</dbReference>
<dbReference type="GO" id="GO:0045650">
    <property type="term" value="P:negative regulation of macrophage differentiation"/>
    <property type="evidence" value="ECO:0000304"/>
    <property type="project" value="UniProtKB"/>
</dbReference>
<dbReference type="GO" id="GO:0042326">
    <property type="term" value="P:negative regulation of phosphorylation"/>
    <property type="evidence" value="ECO:0000304"/>
    <property type="project" value="UniProtKB"/>
</dbReference>
<dbReference type="GO" id="GO:0032689">
    <property type="term" value="P:negative regulation of type II interferon production"/>
    <property type="evidence" value="ECO:0000304"/>
    <property type="project" value="UniProtKB"/>
</dbReference>
<dbReference type="GO" id="GO:0007399">
    <property type="term" value="P:nervous system development"/>
    <property type="evidence" value="ECO:0000303"/>
    <property type="project" value="UniProtKB"/>
</dbReference>
<dbReference type="GO" id="GO:0042476">
    <property type="term" value="P:odontogenesis"/>
    <property type="evidence" value="ECO:0000316"/>
    <property type="project" value="UniProtKB"/>
</dbReference>
<dbReference type="GO" id="GO:0001541">
    <property type="term" value="P:ovarian follicle development"/>
    <property type="evidence" value="ECO:0000316"/>
    <property type="project" value="UniProtKB"/>
</dbReference>
<dbReference type="GO" id="GO:0032967">
    <property type="term" value="P:positive regulation of collagen biosynthetic process"/>
    <property type="evidence" value="ECO:0007669"/>
    <property type="project" value="Ensembl"/>
</dbReference>
<dbReference type="GO" id="GO:0045893">
    <property type="term" value="P:positive regulation of DNA-templated transcription"/>
    <property type="evidence" value="ECO:0000314"/>
    <property type="project" value="UniProtKB"/>
</dbReference>
<dbReference type="GO" id="GO:0070374">
    <property type="term" value="P:positive regulation of ERK1 and ERK2 cascade"/>
    <property type="evidence" value="ECO:0007669"/>
    <property type="project" value="Ensembl"/>
</dbReference>
<dbReference type="GO" id="GO:0045648">
    <property type="term" value="P:positive regulation of erythrocyte differentiation"/>
    <property type="evidence" value="ECO:0000314"/>
    <property type="project" value="HGNC-UCL"/>
</dbReference>
<dbReference type="GO" id="GO:2001241">
    <property type="term" value="P:positive regulation of extrinsic apoptotic signaling pathway in absence of ligand"/>
    <property type="evidence" value="ECO:0000314"/>
    <property type="project" value="UniProtKB"/>
</dbReference>
<dbReference type="GO" id="GO:0046881">
    <property type="term" value="P:positive regulation of follicle-stimulating hormone secretion"/>
    <property type="evidence" value="ECO:0000304"/>
    <property type="project" value="UniProtKB"/>
</dbReference>
<dbReference type="GO" id="GO:0010628">
    <property type="term" value="P:positive regulation of gene expression"/>
    <property type="evidence" value="ECO:0000314"/>
    <property type="project" value="BHF-UCL"/>
</dbReference>
<dbReference type="GO" id="GO:0060279">
    <property type="term" value="P:positive regulation of ovulation"/>
    <property type="evidence" value="ECO:0000250"/>
    <property type="project" value="UniProtKB"/>
</dbReference>
<dbReference type="GO" id="GO:0051247">
    <property type="term" value="P:positive regulation of protein metabolic process"/>
    <property type="evidence" value="ECO:0000314"/>
    <property type="project" value="BHF-UCL"/>
</dbReference>
<dbReference type="GO" id="GO:0060391">
    <property type="term" value="P:positive regulation of SMAD protein signal transduction"/>
    <property type="evidence" value="ECO:0000314"/>
    <property type="project" value="BHF-UCL"/>
</dbReference>
<dbReference type="GO" id="GO:0045944">
    <property type="term" value="P:positive regulation of transcription by RNA polymerase II"/>
    <property type="evidence" value="ECO:0000314"/>
    <property type="project" value="UniProtKB"/>
</dbReference>
<dbReference type="GO" id="GO:0045945">
    <property type="term" value="P:positive regulation of transcription by RNA polymerase III"/>
    <property type="evidence" value="ECO:0007669"/>
    <property type="project" value="Ensembl"/>
</dbReference>
<dbReference type="GO" id="GO:0042701">
    <property type="term" value="P:progesterone secretion"/>
    <property type="evidence" value="ECO:0000316"/>
    <property type="project" value="UniProtKB"/>
</dbReference>
<dbReference type="GO" id="GO:0046880">
    <property type="term" value="P:regulation of follicle-stimulating hormone secretion"/>
    <property type="evidence" value="ECO:0000316"/>
    <property type="project" value="UniProtKB"/>
</dbReference>
<dbReference type="GO" id="GO:0006357">
    <property type="term" value="P:regulation of transcription by RNA polymerase II"/>
    <property type="evidence" value="ECO:0000314"/>
    <property type="project" value="UniProtKB"/>
</dbReference>
<dbReference type="GO" id="GO:1904044">
    <property type="term" value="P:response to aldosterone"/>
    <property type="evidence" value="ECO:0007669"/>
    <property type="project" value="Ensembl"/>
</dbReference>
<dbReference type="GO" id="GO:0060021">
    <property type="term" value="P:roof of mouth development"/>
    <property type="evidence" value="ECO:0000316"/>
    <property type="project" value="UniProtKB"/>
</dbReference>
<dbReference type="GO" id="GO:0060008">
    <property type="term" value="P:Sertoli cell differentiation"/>
    <property type="evidence" value="ECO:0007669"/>
    <property type="project" value="Ensembl"/>
</dbReference>
<dbReference type="GO" id="GO:0060395">
    <property type="term" value="P:SMAD protein signal transduction"/>
    <property type="evidence" value="ECO:0007669"/>
    <property type="project" value="Ensembl"/>
</dbReference>
<dbReference type="GO" id="GO:0021773">
    <property type="term" value="P:striatal medium spiny neuron differentiation"/>
    <property type="evidence" value="ECO:0000314"/>
    <property type="project" value="ParkinsonsUK-UCL"/>
</dbReference>
<dbReference type="GO" id="GO:0061370">
    <property type="term" value="P:testosterone biosynthetic process"/>
    <property type="evidence" value="ECO:0007669"/>
    <property type="project" value="Ensembl"/>
</dbReference>
<dbReference type="GO" id="GO:0006366">
    <property type="term" value="P:transcription by RNA polymerase II"/>
    <property type="evidence" value="ECO:0007669"/>
    <property type="project" value="Ensembl"/>
</dbReference>
<dbReference type="CDD" id="cd19404">
    <property type="entry name" value="TGF_beta_INHBA"/>
    <property type="match status" value="1"/>
</dbReference>
<dbReference type="DisProt" id="DP02234"/>
<dbReference type="FunFam" id="2.10.90.10:FF:000005">
    <property type="entry name" value="Inhibin beta A chain"/>
    <property type="match status" value="1"/>
</dbReference>
<dbReference type="FunFam" id="2.60.120.970:FF:000007">
    <property type="entry name" value="Inhibin beta A chain"/>
    <property type="match status" value="1"/>
</dbReference>
<dbReference type="Gene3D" id="2.60.120.970">
    <property type="match status" value="1"/>
</dbReference>
<dbReference type="Gene3D" id="2.10.90.10">
    <property type="entry name" value="Cystine-knot cytokines"/>
    <property type="match status" value="1"/>
</dbReference>
<dbReference type="IDEAL" id="IID00338"/>
<dbReference type="InterPro" id="IPR029034">
    <property type="entry name" value="Cystine-knot_cytokine"/>
</dbReference>
<dbReference type="InterPro" id="IPR000491">
    <property type="entry name" value="Inhibin_betaA"/>
</dbReference>
<dbReference type="InterPro" id="IPR001839">
    <property type="entry name" value="TGF-b_C"/>
</dbReference>
<dbReference type="InterPro" id="IPR001111">
    <property type="entry name" value="TGF-b_propeptide"/>
</dbReference>
<dbReference type="InterPro" id="IPR015615">
    <property type="entry name" value="TGF-beta-rel"/>
</dbReference>
<dbReference type="InterPro" id="IPR017948">
    <property type="entry name" value="TGFb_CS"/>
</dbReference>
<dbReference type="PANTHER" id="PTHR11848:SF133">
    <property type="entry name" value="INHIBIN BETA A CHAIN"/>
    <property type="match status" value="1"/>
</dbReference>
<dbReference type="PANTHER" id="PTHR11848">
    <property type="entry name" value="TGF-BETA FAMILY"/>
    <property type="match status" value="1"/>
</dbReference>
<dbReference type="Pfam" id="PF00019">
    <property type="entry name" value="TGF_beta"/>
    <property type="match status" value="1"/>
</dbReference>
<dbReference type="Pfam" id="PF00688">
    <property type="entry name" value="TGFb_propeptide"/>
    <property type="match status" value="1"/>
</dbReference>
<dbReference type="PRINTS" id="PR00670">
    <property type="entry name" value="INHIBINBA"/>
</dbReference>
<dbReference type="SMART" id="SM00204">
    <property type="entry name" value="TGFB"/>
    <property type="match status" value="1"/>
</dbReference>
<dbReference type="SUPFAM" id="SSF57501">
    <property type="entry name" value="Cystine-knot cytokines"/>
    <property type="match status" value="1"/>
</dbReference>
<dbReference type="PROSITE" id="PS00250">
    <property type="entry name" value="TGF_BETA_1"/>
    <property type="match status" value="1"/>
</dbReference>
<dbReference type="PROSITE" id="PS51362">
    <property type="entry name" value="TGF_BETA_2"/>
    <property type="match status" value="1"/>
</dbReference>
<reference key="1">
    <citation type="journal article" date="1986" name="Biochem. Biophys. Res. Commun.">
        <title>Structure of two human ovarian inhibins.</title>
        <authorList>
            <person name="Mason A.J."/>
            <person name="Niall H.D."/>
            <person name="Seeburg P.H."/>
        </authorList>
    </citation>
    <scope>NUCLEOTIDE SEQUENCE [MRNA]</scope>
</reference>
<reference key="2">
    <citation type="journal article" date="1988" name="Proc. Natl. Acad. Sci. U.S.A.">
        <title>Erythroid differentiation factor is encoded by the same mRNA as that of the inhibin beta A chain.</title>
        <authorList>
            <person name="Murata M."/>
            <person name="Eto Y."/>
            <person name="Shibai H."/>
            <person name="Sakai M."/>
            <person name="Muramatsu M."/>
        </authorList>
    </citation>
    <scope>NUCLEOTIDE SEQUENCE [MRNA]</scope>
</reference>
<reference key="3">
    <citation type="journal article" date="1991" name="DNA Seq.">
        <title>Structure and sequence analysis of the human activin beta A subunit gene.</title>
        <authorList>
            <person name="Tanimoto K."/>
            <person name="Handa S.I."/>
            <person name="Ueno N."/>
            <person name="Murakami K."/>
            <person name="Fukamizu A."/>
        </authorList>
    </citation>
    <scope>NUCLEOTIDE SEQUENCE [GENOMIC DNA]</scope>
</reference>
<reference key="4">
    <citation type="journal article" date="2003" name="Nature">
        <title>The DNA sequence of human chromosome 7.</title>
        <authorList>
            <person name="Hillier L.W."/>
            <person name="Fulton R.S."/>
            <person name="Fulton L.A."/>
            <person name="Graves T.A."/>
            <person name="Pepin K.H."/>
            <person name="Wagner-McPherson C."/>
            <person name="Layman D."/>
            <person name="Maas J."/>
            <person name="Jaeger S."/>
            <person name="Walker R."/>
            <person name="Wylie K."/>
            <person name="Sekhon M."/>
            <person name="Becker M.C."/>
            <person name="O'Laughlin M.D."/>
            <person name="Schaller M.E."/>
            <person name="Fewell G.A."/>
            <person name="Delehaunty K.D."/>
            <person name="Miner T.L."/>
            <person name="Nash W.E."/>
            <person name="Cordes M."/>
            <person name="Du H."/>
            <person name="Sun H."/>
            <person name="Edwards J."/>
            <person name="Bradshaw-Cordum H."/>
            <person name="Ali J."/>
            <person name="Andrews S."/>
            <person name="Isak A."/>
            <person name="Vanbrunt A."/>
            <person name="Nguyen C."/>
            <person name="Du F."/>
            <person name="Lamar B."/>
            <person name="Courtney L."/>
            <person name="Kalicki J."/>
            <person name="Ozersky P."/>
            <person name="Bielicki L."/>
            <person name="Scott K."/>
            <person name="Holmes A."/>
            <person name="Harkins R."/>
            <person name="Harris A."/>
            <person name="Strong C.M."/>
            <person name="Hou S."/>
            <person name="Tomlinson C."/>
            <person name="Dauphin-Kohlberg S."/>
            <person name="Kozlowicz-Reilly A."/>
            <person name="Leonard S."/>
            <person name="Rohlfing T."/>
            <person name="Rock S.M."/>
            <person name="Tin-Wollam A.-M."/>
            <person name="Abbott A."/>
            <person name="Minx P."/>
            <person name="Maupin R."/>
            <person name="Strowmatt C."/>
            <person name="Latreille P."/>
            <person name="Miller N."/>
            <person name="Johnson D."/>
            <person name="Murray J."/>
            <person name="Woessner J.P."/>
            <person name="Wendl M.C."/>
            <person name="Yang S.-P."/>
            <person name="Schultz B.R."/>
            <person name="Wallis J.W."/>
            <person name="Spieth J."/>
            <person name="Bieri T.A."/>
            <person name="Nelson J.O."/>
            <person name="Berkowicz N."/>
            <person name="Wohldmann P.E."/>
            <person name="Cook L.L."/>
            <person name="Hickenbotham M.T."/>
            <person name="Eldred J."/>
            <person name="Williams D."/>
            <person name="Bedell J.A."/>
            <person name="Mardis E.R."/>
            <person name="Clifton S.W."/>
            <person name="Chissoe S.L."/>
            <person name="Marra M.A."/>
            <person name="Raymond C."/>
            <person name="Haugen E."/>
            <person name="Gillett W."/>
            <person name="Zhou Y."/>
            <person name="James R."/>
            <person name="Phelps K."/>
            <person name="Iadanoto S."/>
            <person name="Bubb K."/>
            <person name="Simms E."/>
            <person name="Levy R."/>
            <person name="Clendenning J."/>
            <person name="Kaul R."/>
            <person name="Kent W.J."/>
            <person name="Furey T.S."/>
            <person name="Baertsch R.A."/>
            <person name="Brent M.R."/>
            <person name="Keibler E."/>
            <person name="Flicek P."/>
            <person name="Bork P."/>
            <person name="Suyama M."/>
            <person name="Bailey J.A."/>
            <person name="Portnoy M.E."/>
            <person name="Torrents D."/>
            <person name="Chinwalla A.T."/>
            <person name="Gish W.R."/>
            <person name="Eddy S.R."/>
            <person name="McPherson J.D."/>
            <person name="Olson M.V."/>
            <person name="Eichler E.E."/>
            <person name="Green E.D."/>
            <person name="Waterston R.H."/>
            <person name="Wilson R.K."/>
        </authorList>
    </citation>
    <scope>NUCLEOTIDE SEQUENCE [LARGE SCALE GENOMIC DNA]</scope>
</reference>
<reference key="5">
    <citation type="journal article" date="2004" name="Genome Res.">
        <title>The status, quality, and expansion of the NIH full-length cDNA project: the Mammalian Gene Collection (MGC).</title>
        <authorList>
            <consortium name="The MGC Project Team"/>
        </authorList>
    </citation>
    <scope>NUCLEOTIDE SEQUENCE [LARGE SCALE MRNA]</scope>
    <source>
        <tissue>Eye</tissue>
    </source>
</reference>
<reference key="6">
    <citation type="journal article" date="1986" name="FEBS Lett.">
        <title>Human inhibin genes. Genomic characterisation and sequencing.</title>
        <authorList>
            <person name="Stewart A.G."/>
            <person name="Milborrow H.M."/>
            <person name="Ring J.M."/>
            <person name="Crowther C.E."/>
            <person name="Forage R.G."/>
        </authorList>
    </citation>
    <scope>NUCLEOTIDE SEQUENCE [GENOMIC DNA] OF 311-426</scope>
</reference>
<reference key="7">
    <citation type="submission" date="1993-05" db="EMBL/GenBank/DDBJ databases">
        <authorList>
            <person name="Berg H."/>
            <person name="Walter M."/>
            <person name="Northemann W."/>
        </authorList>
    </citation>
    <scope>NUCLEOTIDE SEQUENCE OF 311-426</scope>
    <source>
        <tissue>Testis</tissue>
    </source>
</reference>
<reference key="8">
    <citation type="journal article" date="1988" name="Proc. Natl. Acad. Sci. U.S.A.">
        <title>Selective and indirect modulation of human multipotential and erythroid hematopoietic progenitor cell proliferation by recombinant human activin and inhibin.</title>
        <authorList>
            <person name="Broxmeyer H.E."/>
            <person name="Lu L."/>
            <person name="Cooper S."/>
            <person name="Schwall R.H."/>
            <person name="Mason A.J."/>
            <person name="Nikolics K."/>
        </authorList>
    </citation>
    <scope>FUNCTION</scope>
</reference>
<reference key="9">
    <citation type="journal article" date="2000" name="J. Biol. Chem.">
        <title>Identification of a binding site on the type II activin receptor for activin and inhibin.</title>
        <authorList>
            <person name="Gray P.C."/>
            <person name="Greenwald J."/>
            <person name="Blount A.L."/>
            <person name="Kunitake K.S."/>
            <person name="Donaldson C.J."/>
            <person name="Choe S."/>
            <person name="Vale W."/>
        </authorList>
    </citation>
    <scope>FUNCTION</scope>
    <scope>INTERACTION WITH ACVR2A</scope>
</reference>
<reference key="10">
    <citation type="journal article" date="2000" name="Nature">
        <title>Betaglycan binds inhibin and can mediate functional antagonism of activin signalling.</title>
        <authorList>
            <person name="Lewis K.A."/>
            <person name="Gray P.C."/>
            <person name="Blount A.L."/>
            <person name="MacConell L.A."/>
            <person name="Wiater E."/>
            <person name="Bilezikjian L.M."/>
            <person name="Vale W."/>
        </authorList>
    </citation>
    <scope>FUNCTION</scope>
</reference>
<reference key="11">
    <citation type="journal article" date="2001" name="J. Biol. Chem.">
        <title>Follistatin: essential role for the N-terminal domain in activin binding and neutralization.</title>
        <authorList>
            <person name="Sidis Y."/>
            <person name="Schneyer A.L."/>
            <person name="Sluss P.M."/>
            <person name="Johnson L.N."/>
            <person name="Keutmann H.T."/>
        </authorList>
    </citation>
    <scope>FUNCTION</scope>
    <scope>SUBCELLULAR LOCATION</scope>
    <scope>INTERACTION WITH FOLLISTATIN/FST</scope>
</reference>
<reference key="12">
    <citation type="journal article" date="2003" name="Endocrinology">
        <title>Differential binding and neutralization of activins A and B by follistatin and follistatin like-3 (FSTL-3/FSRP/FLRG).</title>
        <authorList>
            <person name="Schneyer A."/>
            <person name="Schoen A."/>
            <person name="Quigg A."/>
            <person name="Sidis Y."/>
        </authorList>
    </citation>
    <scope>INTERACTION WITH FST AND FSTL3</scope>
</reference>
<reference key="13">
    <citation type="journal article" date="2006" name="J. Cell. Biochem.">
        <title>Activin A induces erythroid gene expressions and inhibits mitogenic cytokine-mediated K562 colony formation by activating p38 MAPK.</title>
        <authorList>
            <person name="Huang H.M."/>
            <person name="Chiou H.Y."/>
            <person name="Chang J.L."/>
        </authorList>
    </citation>
    <scope>FUNCTION</scope>
</reference>
<reference key="14">
    <citation type="journal article" date="2013" name="Cell. Signal.">
        <title>Activins bind and signal via bone morphogenetic protein receptor type II (BMPR2) in immortalized gonadotrope-like cells.</title>
        <authorList>
            <person name="Rejon C.A."/>
            <person name="Hancock M.A."/>
            <person name="Li Y.N."/>
            <person name="Thompson T.B."/>
            <person name="Hebert T.E."/>
            <person name="Bernard D.J."/>
        </authorList>
    </citation>
    <scope>FUNCTION</scope>
    <scope>INTERACTION WITH BMPR2</scope>
</reference>
<reference key="15">
    <citation type="journal article" date="2015" name="Sci. Transl. Med.">
        <title>ACVR1R206H receptor mutation causes fibrodysplasia ossificans progressiva by imparting responsiveness to activin A.</title>
        <authorList>
            <person name="Hatsell S.J."/>
            <person name="Idone V."/>
            <person name="Wolken D.M."/>
            <person name="Huang L."/>
            <person name="Kim H.J."/>
            <person name="Wang L."/>
            <person name="Wen X."/>
            <person name="Nannuru K.C."/>
            <person name="Jimenez J."/>
            <person name="Xie L."/>
            <person name="Das N."/>
            <person name="Makhoul G."/>
            <person name="Chernomorsky R."/>
            <person name="D'Ambrosio D."/>
            <person name="Corpina R.A."/>
            <person name="Schoenherr C.J."/>
            <person name="Feeley K."/>
            <person name="Yu P.B."/>
            <person name="Yancopoulos G.D."/>
            <person name="Murphy A.J."/>
            <person name="Economides A.N."/>
        </authorList>
    </citation>
    <scope>FUNCTION</scope>
</reference>
<reference key="16">
    <citation type="journal article" date="2021" name="Int. J. Mol. Sci.">
        <title>Activin A Promotes Osteoblastic Differentiation of Human Preosteoblasts through the ALK1-Smad1/5/9 Pathway.</title>
        <authorList>
            <person name="Sugii H."/>
            <person name="Albougha M.S."/>
            <person name="Adachi O."/>
            <person name="Tomita H."/>
            <person name="Tomokiyo A."/>
            <person name="Hamano S."/>
            <person name="Hasegawa D."/>
            <person name="Yoshida S."/>
            <person name="Itoyama T."/>
            <person name="Maeda H."/>
        </authorList>
    </citation>
    <scope>FUNCTION</scope>
</reference>
<reference key="17">
    <citation type="journal article" date="2003" name="EMBO J.">
        <title>Structures of an ActRIIB:activin A complex reveal a novel binding mode for TGF-beta ligand:receptor interactions.</title>
        <authorList>
            <person name="Thompson T.B."/>
            <person name="Woodruff T.K."/>
            <person name="Jardetzky T.S."/>
        </authorList>
    </citation>
    <scope>X-RAY CRYSTALLOGRAPHY (3.05 ANGSTROMS) IN COMPLEX WITH RAT ACTRIIB EXTRACELLULAR DOMAIN</scope>
</reference>
<reference key="18">
    <citation type="journal article" date="2008" name="J. Biol. Chem.">
        <title>The structure of FSTL3.activin A complex. Differential binding of N-terminal domains influences follistatin-type antagonist specificity.</title>
        <authorList>
            <person name="Stamler R."/>
            <person name="Keutmann H.T."/>
            <person name="Sidis Y."/>
            <person name="Kattamuri C."/>
            <person name="Schneyer A."/>
            <person name="Thompson T.B."/>
        </authorList>
    </citation>
    <scope>X-RAY CRYSTALLOGRAPHY (2.48 ANGSTROMS) OF 311-426 IN COMPLEX WITH FSTL3</scope>
    <scope>DISULFIDE BONDS</scope>
</reference>
<reference key="19">
    <citation type="journal article" date="2014" name="Hum. Mutat.">
        <title>Germline mutations of inhibins in early-onset ovarian epithelial tumors.</title>
        <authorList>
            <person name="Tournier I."/>
            <person name="Marlin R."/>
            <person name="Walton K."/>
            <person name="Charbonnier F."/>
            <person name="Coutant S."/>
            <person name="Thery J.C."/>
            <person name="Charbonnier C."/>
            <person name="Spurrell C."/>
            <person name="Vezain M."/>
            <person name="Ippolito L."/>
            <person name="Bougeard G."/>
            <person name="Roman H."/>
            <person name="Tinat J."/>
            <person name="Sabourin J.C."/>
            <person name="Stoppa-Lyonnet D."/>
            <person name="Caron O."/>
            <person name="Bressac-de Paillerets B."/>
            <person name="Vaur D."/>
            <person name="King M.C."/>
            <person name="Harrison C."/>
            <person name="Frebourg T."/>
        </authorList>
    </citation>
    <scope>VARIANTS GLU-280 AND SER-386</scope>
    <scope>CHARACTERIZATION OF VARIANT SER-386</scope>
</reference>
<keyword id="KW-0002">3D-structure</keyword>
<keyword id="KW-0165">Cleavage on pair of basic residues</keyword>
<keyword id="KW-1015">Disulfide bond</keyword>
<keyword id="KW-0325">Glycoprotein</keyword>
<keyword id="KW-0339">Growth factor</keyword>
<keyword id="KW-0372">Hormone</keyword>
<keyword id="KW-1267">Proteomics identification</keyword>
<keyword id="KW-1185">Reference proteome</keyword>
<keyword id="KW-0964">Secreted</keyword>
<keyword id="KW-0732">Signal</keyword>
<name>INHBA_HUMAN</name>
<organism>
    <name type="scientific">Homo sapiens</name>
    <name type="common">Human</name>
    <dbReference type="NCBI Taxonomy" id="9606"/>
    <lineage>
        <taxon>Eukaryota</taxon>
        <taxon>Metazoa</taxon>
        <taxon>Chordata</taxon>
        <taxon>Craniata</taxon>
        <taxon>Vertebrata</taxon>
        <taxon>Euteleostomi</taxon>
        <taxon>Mammalia</taxon>
        <taxon>Eutheria</taxon>
        <taxon>Euarchontoglires</taxon>
        <taxon>Primates</taxon>
        <taxon>Haplorrhini</taxon>
        <taxon>Catarrhini</taxon>
        <taxon>Hominidae</taxon>
        <taxon>Homo</taxon>
    </lineage>
</organism>
<sequence length="426" mass="47442">MPLLWLRGFLLASCWIIVRSSPTPGSEGHSAAPDCPSCALAALPKDVPNSQPEMVEAVKKHILNMLHLKKRPDVTQPVPKAALLNAIRKLHVGKVGENGYVEIEDDIGRRAEMNELMEQTSEIITFAESGTARKTLHFEISKEGSDLSVVERAEVWLFLKVPKANRTRTKVTIRLFQQQKHPQGSLDTGEEAEEVGLKGERSELLLSEKVVDARKSTWHVFPVSSSIQRLLDQGKSSLDVRIACEQCQESGASLVLLGKKKKKEEEGEGKKKGGGEGGAGADEEKEQSHRPFLMLQARQSEDHPHRRRRRGLECDGKVNICCKKQFFVSFKDIGWNDWIIAPSGYHANYCEGECPSHIAGTSGSSLSFHSTVINHYRMRGHSPFANLKSCCVPTKLRPMSMLYYDDGQNIIKKDIQNMIVEECGCS</sequence>
<gene>
    <name type="primary">INHBA</name>
</gene>
<comment type="function">
    <text evidence="6">Inhibins/activins are involved in regulating a number of diverse functions such as hypothalamic and pituitary hormone secretion, gonadal hormone secretion, germ cell development and maturation, erythroid differentiation, insulin secretion, nerve cell survival, embryonic axial development or bone growth, depending on their subunit composition.</text>
</comment>
<comment type="function">
    <text evidence="4 9 11 13 14 15">Activin A is a homodimer of INHBA that plays a role in several essential biological processes including embryonic development, stem cell maintenance and differentiation, haematopoiesis, cell proliferation and tissue fibrosis (PubMed:3194407, PubMed:16440334). Signals through type I (such as ACVR1B or ACVR1C) and type II receptors (such as ACVR2A, ACVR2B or BMPR2) which, upon ligand binding, phosphorylate SMAD2 and SMAD3 intracellular signaling mediators that form a complex with SMAD4, translocate to the nucleus and modulate gene expression (PubMed:10652306, PubMed:24018044). Can also activate alternative non-canonical intracellular signaling pathways including the p38 MAPK, extracellular signal-regulated kinases 1/2 (ERK1/2) and c-Jun N-terminal kinases (JNKs) to modulate cell migration and differentiation (PubMed:16440334). Alternatively, promotes osteoblastic differentiation via ACVRL1-SMAD1/5/9 pathway (PubMed:34948289). In addition, can engage the type I receptor ACVR1 to form an ACVR1-activin A-type II receptor non-signaling complex (NSC) that renders receptors unavailable for engagement with BMPs, hence resulting in an apparent inhibition of ACVR1-mediated BMP signaling (PubMed:26333933).</text>
</comment>
<comment type="function">
    <text evidence="5">Inhibin A is a dimer of alpha/INHA and beta-A/INHBA that functions as a feedback regulator in the hypothalamic-pituitary-gonadal (HPG) axis. Inhibits the secretion of FSH from the anterior pituitary gland by acting on pituitary gonadotrope cells. Antagonizes activin A by binding to the proteoglycan, betaglycan, and forming a stable complex with and, thereby, sequestering type II activin receptors while excluding type I receptor.</text>
</comment>
<comment type="subunit">
    <text evidence="4 6 7 8 10">Dimeric, linked by one or more disulfide bonds. Inhibin A is a dimer of alpha/INHA and beta-A/INHBA. Activin A is a homodimer of beta-A/INHBA. Activin AB is a dimer of beta-A/INHBA and beta-B/INHBB. Interacts with FST and FSTL3; these interactions prevent activin A interaction to its type II receptor (PubMed:11279126). Activin A interacts with ACVR2A (PubMed:10652306). Activin A interacts with BMPR2 (PubMed:24018044). Inhibin A interacts with ACVR1; this interaction creates a non-signaling complex (NSC) that inhibits ACVR1-mediated BMP signaling (PubMed:10652306). Inhibin A interacts with ACVR2A (PubMed:10652306).</text>
</comment>
<comment type="interaction">
    <interactant intactId="EBI-8077140">
        <id>P08476</id>
    </interactant>
    <interactant intactId="EBI-5746973">
        <id>P21674</id>
        <label>Fst</label>
    </interactant>
    <organismsDiffer>true</organismsDiffer>
    <experiments>2</experiments>
</comment>
<comment type="subcellular location">
    <subcellularLocation>
        <location evidence="6">Secreted</location>
    </subcellularLocation>
</comment>
<comment type="similarity">
    <text evidence="16">Belongs to the TGF-beta family.</text>
</comment>
<comment type="online information" name="Wikipedia">
    <link uri="https://en.wikipedia.org/wiki/Activin"/>
    <text>Activin entry</text>
</comment>